<evidence type="ECO:0000250" key="1">
    <source>
        <dbReference type="UniProtKB" id="A0A0H2ZGJ4"/>
    </source>
</evidence>
<evidence type="ECO:0000255" key="2">
    <source>
        <dbReference type="PROSITE-ProRule" id="PRU00258"/>
    </source>
</evidence>
<evidence type="ECO:0000269" key="3">
    <source>
    </source>
</evidence>
<evidence type="ECO:0000269" key="4">
    <source>
    </source>
</evidence>
<evidence type="ECO:0000303" key="5">
    <source>
    </source>
</evidence>
<evidence type="ECO:0000305" key="6"/>
<evidence type="ECO:0000305" key="7">
    <source>
    </source>
</evidence>
<evidence type="ECO:0000312" key="8">
    <source>
        <dbReference type="EMBL" id="AAG07613.1"/>
    </source>
</evidence>
<protein>
    <recommendedName>
        <fullName evidence="6">Pyochelin synthetase PchF</fullName>
        <ecNumber evidence="7">6.2.1.69</ecNumber>
    </recommendedName>
    <alternativeName>
        <fullName evidence="6">L-cysteine--[L-cysteinyl-carrier protein] ligase</fullName>
    </alternativeName>
    <alternativeName>
        <fullName evidence="6">Nonribosomal peptide synthetase PchF</fullName>
    </alternativeName>
</protein>
<reference key="1">
    <citation type="journal article" date="1998" name="Microbiology">
        <title>Dihydroaeruginoic acid synthetase and pyochelin synthetase, products of the pchEF genes, are induced by extracellular pyochelin in Pseudomonas aeruginosa.</title>
        <authorList>
            <person name="Reimmann C."/>
            <person name="Serino L."/>
            <person name="Beyeler M."/>
            <person name="Haas D."/>
        </authorList>
    </citation>
    <scope>NUCLEOTIDE SEQUENCE [GENOMIC DNA]</scope>
    <scope>FUNCTION</scope>
    <scope>PATHWAY</scope>
    <scope>INDUCTION</scope>
    <scope>DISRUPTION PHENOTYPE</scope>
    <source>
        <strain>ATCC 15692 / DSM 22644 / CIP 104116 / JCM 14847 / LMG 12228 / 1C / PRS 101 / PAO1</strain>
    </source>
</reference>
<reference key="2">
    <citation type="journal article" date="2000" name="Nature">
        <title>Complete genome sequence of Pseudomonas aeruginosa PAO1, an opportunistic pathogen.</title>
        <authorList>
            <person name="Stover C.K."/>
            <person name="Pham X.-Q.T."/>
            <person name="Erwin A.L."/>
            <person name="Mizoguchi S.D."/>
            <person name="Warrener P."/>
            <person name="Hickey M.J."/>
            <person name="Brinkman F.S.L."/>
            <person name="Hufnagle W.O."/>
            <person name="Kowalik D.J."/>
            <person name="Lagrou M."/>
            <person name="Garber R.L."/>
            <person name="Goltry L."/>
            <person name="Tolentino E."/>
            <person name="Westbrock-Wadman S."/>
            <person name="Yuan Y."/>
            <person name="Brody L.L."/>
            <person name="Coulter S.N."/>
            <person name="Folger K.R."/>
            <person name="Kas A."/>
            <person name="Larbig K."/>
            <person name="Lim R.M."/>
            <person name="Smith K.A."/>
            <person name="Spencer D.H."/>
            <person name="Wong G.K.-S."/>
            <person name="Wu Z."/>
            <person name="Paulsen I.T."/>
            <person name="Reizer J."/>
            <person name="Saier M.H. Jr."/>
            <person name="Hancock R.E.W."/>
            <person name="Lory S."/>
            <person name="Olson M.V."/>
        </authorList>
    </citation>
    <scope>NUCLEOTIDE SEQUENCE [LARGE SCALE GENOMIC DNA]</scope>
    <source>
        <strain>ATCC 15692 / DSM 22644 / CIP 104116 / JCM 14847 / LMG 12228 / 1C / PRS 101 / PAO1</strain>
    </source>
</reference>
<reference key="3">
    <citation type="journal article" date="2001" name="J. Bacteriol.">
        <title>Essential PchG-dependent reduction in pyochelin biosynthesis of Pseudomonas aeruginosa.</title>
        <authorList>
            <person name="Reimmann C."/>
            <person name="Patel H.M."/>
            <person name="Serino L."/>
            <person name="Barone M."/>
            <person name="Walsh C.T."/>
            <person name="Haas D."/>
        </authorList>
    </citation>
    <scope>FUNCTION</scope>
    <scope>PATHWAY</scope>
    <source>
        <strain>ATCC 15692 / DSM 22644 / CIP 104116 / JCM 14847 / LMG 12228 / 1C / PRS 101 / PAO1</strain>
    </source>
</reference>
<keyword id="KW-0436">Ligase</keyword>
<keyword id="KW-0596">Phosphopantetheine</keyword>
<keyword id="KW-0597">Phosphoprotein</keyword>
<keyword id="KW-1185">Reference proteome</keyword>
<proteinExistence type="evidence at transcript level"/>
<organism>
    <name type="scientific">Pseudomonas aeruginosa (strain ATCC 15692 / DSM 22644 / CIP 104116 / JCM 14847 / LMG 12228 / 1C / PRS 101 / PAO1)</name>
    <dbReference type="NCBI Taxonomy" id="208964"/>
    <lineage>
        <taxon>Bacteria</taxon>
        <taxon>Pseudomonadati</taxon>
        <taxon>Pseudomonadota</taxon>
        <taxon>Gammaproteobacteria</taxon>
        <taxon>Pseudomonadales</taxon>
        <taxon>Pseudomonadaceae</taxon>
        <taxon>Pseudomonas</taxon>
    </lineage>
</organism>
<gene>
    <name evidence="5" type="primary">pchF</name>
    <name evidence="8" type="ordered locus">PA4225</name>
</gene>
<accession>Q9HWG4</accession>
<accession>O85740</accession>
<feature type="chain" id="PRO_0000454828" description="Pyochelin synthetase PchF">
    <location>
        <begin position="1"/>
        <end position="1809"/>
    </location>
</feature>
<feature type="domain" description="Carrier" evidence="2">
    <location>
        <begin position="1407"/>
        <end position="1488"/>
    </location>
</feature>
<feature type="region of interest" description="Condensation/cyclization" evidence="6">
    <location>
        <begin position="69"/>
        <end position="490"/>
    </location>
</feature>
<feature type="region of interest" description="Adenylation" evidence="6">
    <location>
        <begin position="520"/>
        <end position="915"/>
    </location>
</feature>
<feature type="region of interest" description="Thioesterase" evidence="6">
    <location>
        <begin position="1584"/>
        <end position="1797"/>
    </location>
</feature>
<feature type="modified residue" description="O-(pantetheine 4'-phosphoryl)serine" evidence="2">
    <location>
        <position position="1442"/>
    </location>
</feature>
<feature type="sequence conflict" description="In Ref. 1; AAC83657." evidence="6" ref="1">
    <original>LFSLGGA</original>
    <variation>AVQPGRR</variation>
    <location>
        <begin position="799"/>
        <end position="805"/>
    </location>
</feature>
<sequence length="1809" mass="197084">MSLGELLETCRSRRIELWSEAGRLRYRAPQGALDAGLAERLRAEREALLEHLEGGPGWRAEPDMAHQRFPLTPVQAAYVLGRQAAFDYGGNACQLYAEYDWPADTDPARLEAAWNAMVERHPMLRAVIEDNAWQRVLPEVPWQRLTVHACAGLDEAAFQAHLERVRERLDHACAALDQWPVLRPELSIGRDACVLHCSVDFTLVDYASLQLLLGEWRRRYLDPQWTAEPLEATFRDYVGVEQRRRQSPAWQRDRDWWLARLDALPGRPDLPLRVQPDTRSTRFRHFHARLDEAAWQALGARAGEHGLSAAGVALAAFAETIGRWSQAPAFCLNLTVLNRPPLHPQLAQVLGDFTALSLLAVDSRHGDSFVERARRIGEQMFDDLDHPTFSGVDLLRELARRRGRGADLMPVVFTSGIGSVQRLLGDGEAPRAPRYMISQTPQVWLDCQVTDQFGGLEIGWDVRLGLFPEGQAEAMFDDFVGLLRRLAQSPRAWTDGDATEPVEAPPQALPGSARSIAAGFAERALLTPDATAIHDAAGSYSYRQVAQHASALRRVLEAHGAGRGRRVAVMLPKSAAQLVAVIGILQAGAAYVPVDIRQPPLRRQAILASAEVVALVCLESDVPDVGCACVAIDRLAADSAWPPPPAAEVAADDLAYVIYTSGSTGTPKGVMLSHAAVSNTLLDINQRYGVDANDRVLGLAELSFDLSVYDFFGATAAGAQVVLPDPARGSDPSHWAELLERHAITLWNSVPAQGQMLIDYLESEPQRHLPGPRCVLWSGDWIPVSLPTRWWRRWPDSALFSLGGATEAAIWSIEQPIRPQHTELASIPYGRALRGQSVEVLDARGRRCPPGVRGEIHIGGVGLALGYAGDPQRTAERFVRHPDGRRLYRTGDLGRYLADGSIEFLGREDDQVKIRGHRIELAELDAALCAHPQVNLAATVVLGETHERSLASFVTLHAPVEAGEDPRTALDAVRQRAAQALRRDWGSEEGIAAAVAALDRACLASLAAWLAGSGLFASATPLDLATLCQRLGIAEARQRLLRHWLRQLEEGGYLRAEGEGWLGCAERPAQSPEDAWTAFAGCAPAALWPAELVAYLRDSAQSLGEQLAGRISPAALMFPQGSARIAEAMYSQGLHAQALHEAMAEAIAAIVERQPQRRWRLLELGAGTAAASRTVIARLAPLVQRGAEVDYLFTDVSSYFLAAARERFADQPWVRFGRFDMNGDLLDQGVAPHSVDILLSSGALNNALDTPALLAGLRELLSADAWLVIQELTREHNEISVSQSLMMENPRDLRDERRQLFVHTGQWLEWLAAQGGDLACGVVPPGSALDLLGYDVLLARCKTDRARLEPAELLAFVEARVPRYMLPAQLRVLERLPVTGNGKIDRKALTGFARQPQADLRHGVAQAPADELENALLALWREVLDNPSLGVEQDFFGAGGDSLLIAQLIARLRERLESARRHPFDRLLRWALSQPTPRGLAERLRSAPEEGRGPALAAARGVAPAPAGMSRAPLAEGAVALDPLVRLVPGEGVPRVLVHEGLGTLLPYRPLLRALGEGRPLLGLAVHDSDAYLAIPAEHLNACLGRRYAEALHRAGLREVDLLGYCSGGLVALETAKSLVQRGVRVRQLDIVSSYRIPYRVDDERLLLFSFAATLGLDTAALGFPAPERLGQAVQAALAQTPERLVAEALAGLPGLADLVALRGRVLQAASGSADAVSVERDTLYRLFCHSVRASQAEAPEPYVGALRLFVPDAGNPLVPRYAEALETQWRAAALGACGIHEVPGGHFDCLGEALAQSLSKPMPEEASR</sequence>
<comment type="function">
    <text evidence="1 3 4">Involved in the biosynthesis of the siderophore pyochelin (PubMed:11208777, PubMed:9846750). Adenylates L-cysteine and loads it onto its peptidyl carrier domain via a thioester linkage to the phosphopanthetheine moiety (By similarity). Then forms a peptide bond between the salicyl-thiazolinyl intermediate bound to the second carrier domain of PchE and the cysteine bound to its own peptidyl carrier domain to form the salicyl-thiazolinyl-cysteinyl-S-PCP2 intermediate. It subsequently cyclizes the C-terminal cysteine to form the second thiazoline heterocycle in the salicyl-thiazolinyl-thiazolinyl-S-PCP2 intermediate (By similarity). When this intermediate is released by the action of a thioesterase, it produces the tricyclic acid hydroxyphenyl-thiazolyl-thiazolinyl-carboxylic acid (HPTT-COOH), an advanced intermediate containing the aryl-4,2-bis-heterocyclic skeleton of the bithiazoline class of siderophores (By similarity).</text>
</comment>
<comment type="catalytic activity">
    <reaction evidence="7">
        <text>holo-[peptidyl-carrier protein] + L-cysteine + ATP = L-cysteinyl-[peptidyl-carrier protein] + AMP + diphosphate</text>
        <dbReference type="Rhea" id="RHEA:61680"/>
        <dbReference type="Rhea" id="RHEA-COMP:11480"/>
        <dbReference type="Rhea" id="RHEA-COMP:15906"/>
        <dbReference type="ChEBI" id="CHEBI:30616"/>
        <dbReference type="ChEBI" id="CHEBI:33019"/>
        <dbReference type="ChEBI" id="CHEBI:35235"/>
        <dbReference type="ChEBI" id="CHEBI:64479"/>
        <dbReference type="ChEBI" id="CHEBI:144926"/>
        <dbReference type="ChEBI" id="CHEBI:456215"/>
        <dbReference type="EC" id="6.2.1.69"/>
    </reaction>
    <physiologicalReaction direction="left-to-right" evidence="7">
        <dbReference type="Rhea" id="RHEA:61681"/>
    </physiologicalReaction>
</comment>
<comment type="cofactor">
    <cofactor evidence="6">
        <name>pantetheine 4'-phosphate</name>
        <dbReference type="ChEBI" id="CHEBI:47942"/>
    </cofactor>
</comment>
<comment type="pathway">
    <text evidence="3 4">Siderophore biosynthesis.</text>
</comment>
<comment type="induction">
    <text evidence="4">Expression of the pchEF operon is strictly dependent on the PchR regulator and is induced by extracellular pyochelin, the end product of the pathway. Repressed by Fur and iron.</text>
</comment>
<comment type="domain">
    <text evidence="1">Modular protein that contains a condensation/cyclization domain involved in the cyclization of the cysteine, an adenylation domain which activates the cysteine residue into an aminoacyl-AMP ester, a peptidyl carrier protein (PCP2) domain which bears a phosphopantetheinyl arm to attach the activated cysteine and a thioesterase domain (TE) that may release the newly synthesized peptide from the enzyme.</text>
</comment>
<comment type="disruption phenotype">
    <text evidence="4">Mutant can still form salicylate and Dha, but is no longer able to synthesize pyochelin.</text>
</comment>
<comment type="similarity">
    <text evidence="6">Belongs to the NRP synthetase family.</text>
</comment>
<name>PCHF_PSEAE</name>
<dbReference type="EC" id="6.2.1.69" evidence="7"/>
<dbReference type="EMBL" id="AF074705">
    <property type="protein sequence ID" value="AAC83657.1"/>
    <property type="molecule type" value="Genomic_DNA"/>
</dbReference>
<dbReference type="EMBL" id="AE004091">
    <property type="protein sequence ID" value="AAG07613.1"/>
    <property type="molecule type" value="Genomic_DNA"/>
</dbReference>
<dbReference type="PIR" id="C83118">
    <property type="entry name" value="C83118"/>
</dbReference>
<dbReference type="PIR" id="T17403">
    <property type="entry name" value="T17403"/>
</dbReference>
<dbReference type="RefSeq" id="NP_252915.1">
    <property type="nucleotide sequence ID" value="NC_002516.2"/>
</dbReference>
<dbReference type="RefSeq" id="WP_003148107.1">
    <property type="nucleotide sequence ID" value="NZ_QZFW01000022.1"/>
</dbReference>
<dbReference type="EMDB" id="EMD-31198"/>
<dbReference type="EMDB" id="EMD-31199"/>
<dbReference type="EMDB" id="EMD-31200"/>
<dbReference type="SMR" id="Q9HWG4"/>
<dbReference type="FunCoup" id="Q9HWG4">
    <property type="interactions" value="88"/>
</dbReference>
<dbReference type="STRING" id="208964.PA4225"/>
<dbReference type="ESTHER" id="pseae-PCHF">
    <property type="family name" value="Thioesterase"/>
</dbReference>
<dbReference type="PaxDb" id="208964-PA4225"/>
<dbReference type="GeneID" id="880083"/>
<dbReference type="KEGG" id="pae:PA4225"/>
<dbReference type="PATRIC" id="fig|208964.12.peg.4426"/>
<dbReference type="PseudoCAP" id="PA4225"/>
<dbReference type="HOGENOM" id="CLU_000022_2_15_6"/>
<dbReference type="InParanoid" id="Q9HWG4"/>
<dbReference type="OrthoDB" id="9757559at2"/>
<dbReference type="PhylomeDB" id="Q9HWG4"/>
<dbReference type="BioCyc" id="PAER208964:G1FZ6-4298-MONOMER"/>
<dbReference type="Proteomes" id="UP000002438">
    <property type="component" value="Chromosome"/>
</dbReference>
<dbReference type="GO" id="GO:0005737">
    <property type="term" value="C:cytoplasm"/>
    <property type="evidence" value="ECO:0000318"/>
    <property type="project" value="GO_Central"/>
</dbReference>
<dbReference type="GO" id="GO:0016874">
    <property type="term" value="F:ligase activity"/>
    <property type="evidence" value="ECO:0007669"/>
    <property type="project" value="UniProtKB-KW"/>
</dbReference>
<dbReference type="GO" id="GO:0031177">
    <property type="term" value="F:phosphopantetheine binding"/>
    <property type="evidence" value="ECO:0000318"/>
    <property type="project" value="GO_Central"/>
</dbReference>
<dbReference type="GO" id="GO:0043041">
    <property type="term" value="P:amino acid activation for nonribosomal peptide biosynthetic process"/>
    <property type="evidence" value="ECO:0000318"/>
    <property type="project" value="GO_Central"/>
</dbReference>
<dbReference type="GO" id="GO:0044550">
    <property type="term" value="P:secondary metabolite biosynthetic process"/>
    <property type="evidence" value="ECO:0000318"/>
    <property type="project" value="GO_Central"/>
</dbReference>
<dbReference type="GO" id="GO:0009403">
    <property type="term" value="P:toxin biosynthetic process"/>
    <property type="evidence" value="ECO:0007669"/>
    <property type="project" value="UniProtKB-ARBA"/>
</dbReference>
<dbReference type="CDD" id="cd12114">
    <property type="entry name" value="A_NRPS_TlmIV_like"/>
    <property type="match status" value="1"/>
</dbReference>
<dbReference type="CDD" id="cd19535">
    <property type="entry name" value="Cyc_NRPS"/>
    <property type="match status" value="1"/>
</dbReference>
<dbReference type="FunFam" id="1.10.1200.10:FF:000016">
    <property type="entry name" value="Non-ribosomal peptide synthase"/>
    <property type="match status" value="1"/>
</dbReference>
<dbReference type="FunFam" id="3.30.559.10:FF:000023">
    <property type="entry name" value="Non-ribosomal peptide synthetase"/>
    <property type="match status" value="1"/>
</dbReference>
<dbReference type="FunFam" id="3.40.50.12780:FF:000012">
    <property type="entry name" value="Non-ribosomal peptide synthetase"/>
    <property type="match status" value="1"/>
</dbReference>
<dbReference type="FunFam" id="3.30.559.30:FF:000006">
    <property type="entry name" value="Yersiniabactin polyketide/non-ribosomal peptide synthetase"/>
    <property type="match status" value="1"/>
</dbReference>
<dbReference type="Gene3D" id="3.30.300.30">
    <property type="match status" value="2"/>
</dbReference>
<dbReference type="Gene3D" id="1.10.1200.10">
    <property type="entry name" value="ACP-like"/>
    <property type="match status" value="1"/>
</dbReference>
<dbReference type="Gene3D" id="3.40.50.1820">
    <property type="entry name" value="alpha/beta hydrolase"/>
    <property type="match status" value="1"/>
</dbReference>
<dbReference type="Gene3D" id="3.30.559.10">
    <property type="entry name" value="Chloramphenicol acetyltransferase-like domain"/>
    <property type="match status" value="1"/>
</dbReference>
<dbReference type="Gene3D" id="3.40.50.12780">
    <property type="entry name" value="N-terminal domain of ligase-like"/>
    <property type="match status" value="1"/>
</dbReference>
<dbReference type="Gene3D" id="1.10.10.1830">
    <property type="entry name" value="Non-ribosomal peptide synthase, adenylation domain"/>
    <property type="match status" value="1"/>
</dbReference>
<dbReference type="Gene3D" id="3.30.559.30">
    <property type="entry name" value="Nonribosomal peptide synthetase, condensation domain"/>
    <property type="match status" value="1"/>
</dbReference>
<dbReference type="Gene3D" id="3.40.50.150">
    <property type="entry name" value="Vaccinia Virus protein VP39"/>
    <property type="match status" value="1"/>
</dbReference>
<dbReference type="InterPro" id="IPR010071">
    <property type="entry name" value="AA_adenyl_dom"/>
</dbReference>
<dbReference type="InterPro" id="IPR029058">
    <property type="entry name" value="AB_hydrolase_fold"/>
</dbReference>
<dbReference type="InterPro" id="IPR036736">
    <property type="entry name" value="ACP-like_sf"/>
</dbReference>
<dbReference type="InterPro" id="IPR045851">
    <property type="entry name" value="AMP-bd_C_sf"/>
</dbReference>
<dbReference type="InterPro" id="IPR020459">
    <property type="entry name" value="AMP-binding"/>
</dbReference>
<dbReference type="InterPro" id="IPR020845">
    <property type="entry name" value="AMP-binding_CS"/>
</dbReference>
<dbReference type="InterPro" id="IPR000873">
    <property type="entry name" value="AMP-dep_synth/lig_dom"/>
</dbReference>
<dbReference type="InterPro" id="IPR042099">
    <property type="entry name" value="ANL_N_sf"/>
</dbReference>
<dbReference type="InterPro" id="IPR023213">
    <property type="entry name" value="CAT-like_dom_sf"/>
</dbReference>
<dbReference type="InterPro" id="IPR001242">
    <property type="entry name" value="Condensatn"/>
</dbReference>
<dbReference type="InterPro" id="IPR013217">
    <property type="entry name" value="Methyltransf_12"/>
</dbReference>
<dbReference type="InterPro" id="IPR009081">
    <property type="entry name" value="PP-bd_ACP"/>
</dbReference>
<dbReference type="InterPro" id="IPR006162">
    <property type="entry name" value="Ppantetheine_attach_site"/>
</dbReference>
<dbReference type="InterPro" id="IPR029063">
    <property type="entry name" value="SAM-dependent_MTases_sf"/>
</dbReference>
<dbReference type="InterPro" id="IPR041464">
    <property type="entry name" value="TubC_N"/>
</dbReference>
<dbReference type="InterPro" id="IPR044894">
    <property type="entry name" value="TubC_N_sf"/>
</dbReference>
<dbReference type="NCBIfam" id="TIGR01733">
    <property type="entry name" value="AA-adenyl-dom"/>
    <property type="match status" value="1"/>
</dbReference>
<dbReference type="PANTHER" id="PTHR45527">
    <property type="entry name" value="NONRIBOSOMAL PEPTIDE SYNTHETASE"/>
    <property type="match status" value="1"/>
</dbReference>
<dbReference type="PANTHER" id="PTHR45527:SF10">
    <property type="entry name" value="PYOCHELIN SYNTHASE PCHF"/>
    <property type="match status" value="1"/>
</dbReference>
<dbReference type="Pfam" id="PF00501">
    <property type="entry name" value="AMP-binding"/>
    <property type="match status" value="1"/>
</dbReference>
<dbReference type="Pfam" id="PF00668">
    <property type="entry name" value="Condensation"/>
    <property type="match status" value="1"/>
</dbReference>
<dbReference type="Pfam" id="PF08242">
    <property type="entry name" value="Methyltransf_12"/>
    <property type="match status" value="1"/>
</dbReference>
<dbReference type="Pfam" id="PF00550">
    <property type="entry name" value="PP-binding"/>
    <property type="match status" value="1"/>
</dbReference>
<dbReference type="Pfam" id="PF18563">
    <property type="entry name" value="TubC_N"/>
    <property type="match status" value="1"/>
</dbReference>
<dbReference type="PRINTS" id="PR00154">
    <property type="entry name" value="AMPBINDING"/>
</dbReference>
<dbReference type="SUPFAM" id="SSF56801">
    <property type="entry name" value="Acetyl-CoA synthetase-like"/>
    <property type="match status" value="1"/>
</dbReference>
<dbReference type="SUPFAM" id="SSF47336">
    <property type="entry name" value="ACP-like"/>
    <property type="match status" value="1"/>
</dbReference>
<dbReference type="SUPFAM" id="SSF53474">
    <property type="entry name" value="alpha/beta-Hydrolases"/>
    <property type="match status" value="1"/>
</dbReference>
<dbReference type="SUPFAM" id="SSF52777">
    <property type="entry name" value="CoA-dependent acyltransferases"/>
    <property type="match status" value="2"/>
</dbReference>
<dbReference type="SUPFAM" id="SSF53335">
    <property type="entry name" value="S-adenosyl-L-methionine-dependent methyltransferases"/>
    <property type="match status" value="1"/>
</dbReference>
<dbReference type="PROSITE" id="PS00455">
    <property type="entry name" value="AMP_BINDING"/>
    <property type="match status" value="1"/>
</dbReference>
<dbReference type="PROSITE" id="PS50075">
    <property type="entry name" value="CARRIER"/>
    <property type="match status" value="1"/>
</dbReference>
<dbReference type="PROSITE" id="PS00012">
    <property type="entry name" value="PHOSPHOPANTETHEINE"/>
    <property type="match status" value="1"/>
</dbReference>